<comment type="catalytic activity">
    <reaction evidence="1">
        <text>diphosphate + H2O = 2 phosphate + H(+)</text>
        <dbReference type="Rhea" id="RHEA:24576"/>
        <dbReference type="ChEBI" id="CHEBI:15377"/>
        <dbReference type="ChEBI" id="CHEBI:15378"/>
        <dbReference type="ChEBI" id="CHEBI:33019"/>
        <dbReference type="ChEBI" id="CHEBI:43474"/>
        <dbReference type="EC" id="3.6.1.1"/>
    </reaction>
</comment>
<comment type="cofactor">
    <cofactor evidence="1">
        <name>Mn(2+)</name>
        <dbReference type="ChEBI" id="CHEBI:29035"/>
    </cofactor>
    <text evidence="1">Binds 2 manganese ions per subunit.</text>
</comment>
<comment type="subcellular location">
    <subcellularLocation>
        <location evidence="1">Cytoplasm</location>
    </subcellularLocation>
</comment>
<comment type="similarity">
    <text evidence="1">Belongs to the PPase class C family.</text>
</comment>
<organism>
    <name type="scientific">Staphylococcus aureus (strain USA300 / TCH1516)</name>
    <dbReference type="NCBI Taxonomy" id="451516"/>
    <lineage>
        <taxon>Bacteria</taxon>
        <taxon>Bacillati</taxon>
        <taxon>Bacillota</taxon>
        <taxon>Bacilli</taxon>
        <taxon>Bacillales</taxon>
        <taxon>Staphylococcaceae</taxon>
        <taxon>Staphylococcus</taxon>
    </lineage>
</organism>
<dbReference type="EC" id="3.6.1.1" evidence="1"/>
<dbReference type="EMBL" id="CP000730">
    <property type="protein sequence ID" value="ABX29923.1"/>
    <property type="molecule type" value="Genomic_DNA"/>
</dbReference>
<dbReference type="RefSeq" id="WP_001140871.1">
    <property type="nucleotide sequence ID" value="NC_010079.1"/>
</dbReference>
<dbReference type="SMR" id="A8Z2T4"/>
<dbReference type="KEGG" id="sax:USA300HOU_1921"/>
<dbReference type="HOGENOM" id="CLU_025243_0_1_9"/>
<dbReference type="GO" id="GO:0005737">
    <property type="term" value="C:cytoplasm"/>
    <property type="evidence" value="ECO:0007669"/>
    <property type="project" value="UniProtKB-SubCell"/>
</dbReference>
<dbReference type="GO" id="GO:0004427">
    <property type="term" value="F:inorganic diphosphate phosphatase activity"/>
    <property type="evidence" value="ECO:0007669"/>
    <property type="project" value="UniProtKB-UniRule"/>
</dbReference>
<dbReference type="GO" id="GO:0030145">
    <property type="term" value="F:manganese ion binding"/>
    <property type="evidence" value="ECO:0007669"/>
    <property type="project" value="UniProtKB-UniRule"/>
</dbReference>
<dbReference type="FunFam" id="3.10.310.20:FF:000001">
    <property type="entry name" value="Probable manganese-dependent inorganic pyrophosphatase"/>
    <property type="match status" value="1"/>
</dbReference>
<dbReference type="FunFam" id="3.90.1640.10:FF:000001">
    <property type="entry name" value="Probable manganese-dependent inorganic pyrophosphatase"/>
    <property type="match status" value="1"/>
</dbReference>
<dbReference type="Gene3D" id="3.10.310.20">
    <property type="entry name" value="DHHA2 domain"/>
    <property type="match status" value="1"/>
</dbReference>
<dbReference type="Gene3D" id="3.90.1640.10">
    <property type="entry name" value="inorganic pyrophosphatase (n-terminal core)"/>
    <property type="match status" value="1"/>
</dbReference>
<dbReference type="HAMAP" id="MF_00207">
    <property type="entry name" value="PPase_C"/>
    <property type="match status" value="1"/>
</dbReference>
<dbReference type="InterPro" id="IPR001667">
    <property type="entry name" value="DDH_dom"/>
</dbReference>
<dbReference type="InterPro" id="IPR038763">
    <property type="entry name" value="DHH_sf"/>
</dbReference>
<dbReference type="InterPro" id="IPR004097">
    <property type="entry name" value="DHHA2"/>
</dbReference>
<dbReference type="InterPro" id="IPR038222">
    <property type="entry name" value="DHHA2_dom_sf"/>
</dbReference>
<dbReference type="InterPro" id="IPR022934">
    <property type="entry name" value="Mn-dep_inorganic_PyrPase"/>
</dbReference>
<dbReference type="NCBIfam" id="NF003877">
    <property type="entry name" value="PRK05427.1"/>
    <property type="match status" value="1"/>
</dbReference>
<dbReference type="PANTHER" id="PTHR12112">
    <property type="entry name" value="BNIP - RELATED"/>
    <property type="match status" value="1"/>
</dbReference>
<dbReference type="PANTHER" id="PTHR12112:SF22">
    <property type="entry name" value="MANGANESE-DEPENDENT INORGANIC PYROPHOSPHATASE-RELATED"/>
    <property type="match status" value="1"/>
</dbReference>
<dbReference type="Pfam" id="PF01368">
    <property type="entry name" value="DHH"/>
    <property type="match status" value="1"/>
</dbReference>
<dbReference type="Pfam" id="PF02833">
    <property type="entry name" value="DHHA2"/>
    <property type="match status" value="1"/>
</dbReference>
<dbReference type="SMART" id="SM01131">
    <property type="entry name" value="DHHA2"/>
    <property type="match status" value="1"/>
</dbReference>
<dbReference type="SUPFAM" id="SSF64182">
    <property type="entry name" value="DHH phosphoesterases"/>
    <property type="match status" value="1"/>
</dbReference>
<gene>
    <name evidence="1" type="primary">ppaC</name>
    <name type="ordered locus">USA300HOU_1921</name>
</gene>
<name>PPAC_STAAT</name>
<feature type="chain" id="PRO_1000077978" description="Probable manganese-dependent inorganic pyrophosphatase">
    <location>
        <begin position="1"/>
        <end position="309"/>
    </location>
</feature>
<feature type="binding site" evidence="1">
    <location>
        <position position="9"/>
    </location>
    <ligand>
        <name>Mn(2+)</name>
        <dbReference type="ChEBI" id="CHEBI:29035"/>
        <label>1</label>
    </ligand>
</feature>
<feature type="binding site" evidence="1">
    <location>
        <position position="13"/>
    </location>
    <ligand>
        <name>Mn(2+)</name>
        <dbReference type="ChEBI" id="CHEBI:29035"/>
        <label>1</label>
    </ligand>
</feature>
<feature type="binding site" evidence="1">
    <location>
        <position position="15"/>
    </location>
    <ligand>
        <name>Mn(2+)</name>
        <dbReference type="ChEBI" id="CHEBI:29035"/>
        <label>2</label>
    </ligand>
</feature>
<feature type="binding site" evidence="1">
    <location>
        <position position="75"/>
    </location>
    <ligand>
        <name>Mn(2+)</name>
        <dbReference type="ChEBI" id="CHEBI:29035"/>
        <label>1</label>
    </ligand>
</feature>
<feature type="binding site" evidence="1">
    <location>
        <position position="75"/>
    </location>
    <ligand>
        <name>Mn(2+)</name>
        <dbReference type="ChEBI" id="CHEBI:29035"/>
        <label>2</label>
    </ligand>
</feature>
<feature type="binding site" evidence="1">
    <location>
        <position position="97"/>
    </location>
    <ligand>
        <name>Mn(2+)</name>
        <dbReference type="ChEBI" id="CHEBI:29035"/>
        <label>2</label>
    </ligand>
</feature>
<feature type="binding site" evidence="1">
    <location>
        <position position="149"/>
    </location>
    <ligand>
        <name>Mn(2+)</name>
        <dbReference type="ChEBI" id="CHEBI:29035"/>
        <label>2</label>
    </ligand>
</feature>
<proteinExistence type="inferred from homology"/>
<keyword id="KW-0963">Cytoplasm</keyword>
<keyword id="KW-0378">Hydrolase</keyword>
<keyword id="KW-0464">Manganese</keyword>
<keyword id="KW-0479">Metal-binding</keyword>
<evidence type="ECO:0000255" key="1">
    <source>
        <dbReference type="HAMAP-Rule" id="MF_00207"/>
    </source>
</evidence>
<reference key="1">
    <citation type="journal article" date="2007" name="BMC Microbiol.">
        <title>Subtle genetic changes enhance virulence of methicillin resistant and sensitive Staphylococcus aureus.</title>
        <authorList>
            <person name="Highlander S.K."/>
            <person name="Hulten K.G."/>
            <person name="Qin X."/>
            <person name="Jiang H."/>
            <person name="Yerrapragada S."/>
            <person name="Mason E.O. Jr."/>
            <person name="Shang Y."/>
            <person name="Williams T.M."/>
            <person name="Fortunov R.M."/>
            <person name="Liu Y."/>
            <person name="Igboeli O."/>
            <person name="Petrosino J."/>
            <person name="Tirumalai M."/>
            <person name="Uzman A."/>
            <person name="Fox G.E."/>
            <person name="Cardenas A.M."/>
            <person name="Muzny D.M."/>
            <person name="Hemphill L."/>
            <person name="Ding Y."/>
            <person name="Dugan S."/>
            <person name="Blyth P.R."/>
            <person name="Buhay C.J."/>
            <person name="Dinh H.H."/>
            <person name="Hawes A.C."/>
            <person name="Holder M."/>
            <person name="Kovar C.L."/>
            <person name="Lee S.L."/>
            <person name="Liu W."/>
            <person name="Nazareth L.V."/>
            <person name="Wang Q."/>
            <person name="Zhou J."/>
            <person name="Kaplan S.L."/>
            <person name="Weinstock G.M."/>
        </authorList>
    </citation>
    <scope>NUCLEOTIDE SEQUENCE [LARGE SCALE GENOMIC DNA]</scope>
    <source>
        <strain>USA300 / TCH1516</strain>
    </source>
</reference>
<sequence length="309" mass="34069">MAKTYIFGHKNPDTDAISSAIIMAEFEQLRGNSGAKAYRLGDVSAETQFALDTFNVPAPELLTDDLDGQDVILVDHNEFQQSSDTIASATIKHVIDHHRIANFETAGPLCYRAEPVGCTATILYKMFRERGFEIKPEIAGLMLSAIISDSLLFKSPTCTQQDVKAAEELKDIAKVDIQKYGLDMLKAGASTTDKSVEFLLNMDAKSFTMGDYVTRIAQVNAVDLDEVLNRKEDLEKEMLAVSAQEKYDLFVLVVTDIINSDSKILVVGAEKDKVGEAFNVQLEDDMAFLSGVVSRKKQIVPQITEALTK</sequence>
<protein>
    <recommendedName>
        <fullName evidence="1">Probable manganese-dependent inorganic pyrophosphatase</fullName>
        <ecNumber evidence="1">3.6.1.1</ecNumber>
    </recommendedName>
    <alternativeName>
        <fullName evidence="1">Pyrophosphate phospho-hydrolase</fullName>
        <shortName evidence="1">PPase</shortName>
    </alternativeName>
</protein>
<accession>A8Z2T4</accession>